<sequence>MGQIEWAMWANEQALASGLILITGGIVATAGQFTQWYLGAYSIAAGVLVCLLEYPRGKRSKGSTMERCGQKYLTRVVKLFGPLTRNYYIRAFLHLGLAVPAGFLLATILGTACLAIASGIYLLAAIRGEQWSPIEPKPKERPQIGGTIKQPPSNPPPRPPAEARKKPSEEAAGVPTGGPQENPMPVNDEVV</sequence>
<keyword id="KW-1003">Cell membrane</keyword>
<keyword id="KW-0249">Electron transport</keyword>
<keyword id="KW-0349">Heme</keyword>
<keyword id="KW-0408">Iron</keyword>
<keyword id="KW-1017">Isopeptide bond</keyword>
<keyword id="KW-0472">Membrane</keyword>
<keyword id="KW-0479">Metal-binding</keyword>
<keyword id="KW-0521">NADP</keyword>
<keyword id="KW-0560">Oxidoreductase</keyword>
<keyword id="KW-0597">Phosphoprotein</keyword>
<keyword id="KW-1185">Reference proteome</keyword>
<keyword id="KW-0812">Transmembrane</keyword>
<keyword id="KW-1133">Transmembrane helix</keyword>
<keyword id="KW-0813">Transport</keyword>
<keyword id="KW-0832">Ubl conjugation</keyword>
<proteinExistence type="evidence at transcript level"/>
<name>CY24A_BOVIN</name>
<feature type="initiator methionine" description="Removed" evidence="1">
    <location>
        <position position="1"/>
    </location>
</feature>
<feature type="chain" id="PRO_0000144906" description="Cytochrome b-245 light chain">
    <location>
        <begin position="2"/>
        <end position="191"/>
    </location>
</feature>
<feature type="topological domain" description="Cytoplasmic" evidence="4">
    <location>
        <begin position="2"/>
        <end position="7"/>
    </location>
</feature>
<feature type="transmembrane region" description="Helical" evidence="1">
    <location>
        <begin position="8"/>
        <end position="30"/>
    </location>
</feature>
<feature type="topological domain" description="Extracellular" evidence="4">
    <location>
        <begin position="31"/>
        <end position="35"/>
    </location>
</feature>
<feature type="transmembrane region" description="Helical" evidence="1">
    <location>
        <begin position="36"/>
        <end position="53"/>
    </location>
</feature>
<feature type="topological domain" description="Cytoplasmic" evidence="4">
    <location>
        <begin position="54"/>
        <end position="69"/>
    </location>
</feature>
<feature type="intramembrane region" evidence="1">
    <location>
        <begin position="70"/>
        <end position="80"/>
    </location>
</feature>
<feature type="topological domain" description="Cytoplasmic" evidence="4">
    <location>
        <begin position="81"/>
        <end position="86"/>
    </location>
</feature>
<feature type="transmembrane region" description="Helical" evidence="1">
    <location>
        <begin position="87"/>
        <end position="104"/>
    </location>
</feature>
<feature type="topological domain" description="Extracellular" evidence="4">
    <location>
        <position position="105"/>
    </location>
</feature>
<feature type="transmembrane region" description="Helical" evidence="1">
    <location>
        <begin position="106"/>
        <end position="126"/>
    </location>
</feature>
<feature type="topological domain" description="Cytoplasmic" evidence="4">
    <location>
        <begin position="127"/>
        <end position="191"/>
    </location>
</feature>
<feature type="region of interest" description="Disordered" evidence="3">
    <location>
        <begin position="134"/>
        <end position="191"/>
    </location>
</feature>
<feature type="modified residue" description="Phosphothreonine" evidence="1">
    <location>
        <position position="147"/>
    </location>
</feature>
<feature type="modified residue" description="Phosphoserine" evidence="2">
    <location>
        <position position="168"/>
    </location>
</feature>
<feature type="cross-link" description="Glycyl lysine isopeptide (Lys-Gly) (interchain with G-Cter in ubiquitin)" evidence="2">
    <location>
        <position position="149"/>
    </location>
</feature>
<reference key="1">
    <citation type="journal article" date="1998" name="J. Leukoc. Biol.">
        <title>Cloning and sequencing of the bovine flavocytochrome b subunit proteins, gp91-phox and p22-phox: comparison with other known flavocytochrome b sequences.</title>
        <authorList>
            <person name="Davis A.R."/>
            <person name="Mascolo P.L."/>
            <person name="Bunger P.L."/>
            <person name="Sipes K.M."/>
            <person name="Quinn M.T."/>
        </authorList>
    </citation>
    <scope>NUCLEOTIDE SEQUENCE [MRNA]</scope>
</reference>
<reference key="2">
    <citation type="submission" date="2007-06" db="EMBL/GenBank/DDBJ databases">
        <authorList>
            <consortium name="NIH - Mammalian Gene Collection (MGC) project"/>
        </authorList>
    </citation>
    <scope>NUCLEOTIDE SEQUENCE [LARGE SCALE MRNA]</scope>
    <source>
        <strain>Hereford</strain>
        <tissue>Fetal pancreas</tissue>
    </source>
</reference>
<evidence type="ECO:0000250" key="1">
    <source>
        <dbReference type="UniProtKB" id="P13498"/>
    </source>
</evidence>
<evidence type="ECO:0000250" key="2">
    <source>
        <dbReference type="UniProtKB" id="Q61462"/>
    </source>
</evidence>
<evidence type="ECO:0000256" key="3">
    <source>
        <dbReference type="SAM" id="MobiDB-lite"/>
    </source>
</evidence>
<evidence type="ECO:0000305" key="4"/>
<protein>
    <recommendedName>
        <fullName evidence="1">Cytochrome b-245 light chain</fullName>
    </recommendedName>
    <alternativeName>
        <fullName>Cytochrome b(558) alpha chain</fullName>
    </alternativeName>
    <alternativeName>
        <fullName>Cytochrome b558 subunit alpha</fullName>
    </alternativeName>
    <alternativeName>
        <fullName>Neutrophil cytochrome b 22 kDa polypeptide</fullName>
    </alternativeName>
    <alternativeName>
        <fullName>Superoxide-generating NADPH oxidase light chain subunit</fullName>
    </alternativeName>
    <alternativeName>
        <fullName>p22 phagocyte B-cytochrome</fullName>
    </alternativeName>
    <alternativeName>
        <fullName>p22-phox</fullName>
        <shortName>p22phox</shortName>
    </alternativeName>
</protein>
<organism>
    <name type="scientific">Bos taurus</name>
    <name type="common">Bovine</name>
    <dbReference type="NCBI Taxonomy" id="9913"/>
    <lineage>
        <taxon>Eukaryota</taxon>
        <taxon>Metazoa</taxon>
        <taxon>Chordata</taxon>
        <taxon>Craniata</taxon>
        <taxon>Vertebrata</taxon>
        <taxon>Euteleostomi</taxon>
        <taxon>Mammalia</taxon>
        <taxon>Eutheria</taxon>
        <taxon>Laurasiatheria</taxon>
        <taxon>Artiodactyla</taxon>
        <taxon>Ruminantia</taxon>
        <taxon>Pecora</taxon>
        <taxon>Bovidae</taxon>
        <taxon>Bovinae</taxon>
        <taxon>Bos</taxon>
    </lineage>
</organism>
<accession>O46521</accession>
<accession>A5PK68</accession>
<gene>
    <name evidence="1" type="primary">CYBA</name>
</gene>
<dbReference type="EMBL" id="AF036096">
    <property type="protein sequence ID" value="AAC27246.1"/>
    <property type="molecule type" value="mRNA"/>
</dbReference>
<dbReference type="EMBL" id="BC142380">
    <property type="protein sequence ID" value="AAI42381.1"/>
    <property type="molecule type" value="mRNA"/>
</dbReference>
<dbReference type="RefSeq" id="NP_776459.1">
    <property type="nucleotide sequence ID" value="NM_174034.2"/>
</dbReference>
<dbReference type="SMR" id="O46521"/>
<dbReference type="FunCoup" id="O46521">
    <property type="interactions" value="655"/>
</dbReference>
<dbReference type="STRING" id="9913.ENSBTAP00000066289"/>
<dbReference type="ChEMBL" id="CHEMBL2366457"/>
<dbReference type="PaxDb" id="9913-ENSBTAP00000005080"/>
<dbReference type="PeptideAtlas" id="O46521"/>
<dbReference type="Ensembl" id="ENSBTAT00000121506.1">
    <property type="protein sequence ID" value="ENSBTAP00000082540.1"/>
    <property type="gene ID" value="ENSBTAG00000061619.1"/>
</dbReference>
<dbReference type="GeneID" id="281111"/>
<dbReference type="KEGG" id="bta:281111"/>
<dbReference type="CTD" id="1535"/>
<dbReference type="VEuPathDB" id="HostDB:ENSBTAG00000051907"/>
<dbReference type="eggNOG" id="ENOG502QVK1">
    <property type="taxonomic scope" value="Eukaryota"/>
</dbReference>
<dbReference type="GeneTree" id="ENSGT00390000002290"/>
<dbReference type="HOGENOM" id="CLU_125024_0_0_1"/>
<dbReference type="InParanoid" id="O46521"/>
<dbReference type="OMA" id="ARTGQYC"/>
<dbReference type="OrthoDB" id="2445232at2759"/>
<dbReference type="TreeFam" id="TF328901"/>
<dbReference type="Reactome" id="R-BTA-1222556">
    <property type="pathway name" value="ROS and RNS production in phagocytes"/>
</dbReference>
<dbReference type="Reactome" id="R-BTA-1236973">
    <property type="pathway name" value="Cross-presentation of particulate exogenous antigens (phagosomes)"/>
</dbReference>
<dbReference type="Reactome" id="R-BTA-3299685">
    <property type="pathway name" value="Detoxification of Reactive Oxygen Species"/>
</dbReference>
<dbReference type="Reactome" id="R-BTA-4420097">
    <property type="pathway name" value="VEGFA-VEGFR2 Pathway"/>
</dbReference>
<dbReference type="Reactome" id="R-BTA-5668599">
    <property type="pathway name" value="RHO GTPases Activate NADPH Oxidases"/>
</dbReference>
<dbReference type="Reactome" id="R-BTA-6798695">
    <property type="pathway name" value="Neutrophil degranulation"/>
</dbReference>
<dbReference type="Reactome" id="R-BTA-9013149">
    <property type="pathway name" value="RAC1 GTPase cycle"/>
</dbReference>
<dbReference type="Reactome" id="R-BTA-9013404">
    <property type="pathway name" value="RAC2 GTPase cycle"/>
</dbReference>
<dbReference type="Reactome" id="R-BTA-9013423">
    <property type="pathway name" value="RAC3 GTPase cycle"/>
</dbReference>
<dbReference type="PRO" id="PR:O46521"/>
<dbReference type="Proteomes" id="UP000009136">
    <property type="component" value="Chromosome 18"/>
</dbReference>
<dbReference type="Bgee" id="ENSBTAG00000051907">
    <property type="expression patterns" value="Expressed in monocyte and 100 other cell types or tissues"/>
</dbReference>
<dbReference type="GO" id="GO:0005768">
    <property type="term" value="C:endosome"/>
    <property type="evidence" value="ECO:0007669"/>
    <property type="project" value="Ensembl"/>
</dbReference>
<dbReference type="GO" id="GO:0043020">
    <property type="term" value="C:NADPH oxidase complex"/>
    <property type="evidence" value="ECO:0000250"/>
    <property type="project" value="UniProtKB"/>
</dbReference>
<dbReference type="GO" id="GO:0005886">
    <property type="term" value="C:plasma membrane"/>
    <property type="evidence" value="ECO:0000250"/>
    <property type="project" value="UniProtKB"/>
</dbReference>
<dbReference type="GO" id="GO:0009055">
    <property type="term" value="F:electron transfer activity"/>
    <property type="evidence" value="ECO:0007669"/>
    <property type="project" value="Ensembl"/>
</dbReference>
<dbReference type="GO" id="GO:0020037">
    <property type="term" value="F:heme binding"/>
    <property type="evidence" value="ECO:0007669"/>
    <property type="project" value="InterPro"/>
</dbReference>
<dbReference type="GO" id="GO:0046872">
    <property type="term" value="F:metal ion binding"/>
    <property type="evidence" value="ECO:0007669"/>
    <property type="project" value="UniProtKB-KW"/>
</dbReference>
<dbReference type="GO" id="GO:0046982">
    <property type="term" value="F:protein heterodimerization activity"/>
    <property type="evidence" value="ECO:0007669"/>
    <property type="project" value="Ensembl"/>
</dbReference>
<dbReference type="GO" id="GO:0017124">
    <property type="term" value="F:SH3 domain binding"/>
    <property type="evidence" value="ECO:0007669"/>
    <property type="project" value="Ensembl"/>
</dbReference>
<dbReference type="GO" id="GO:0016175">
    <property type="term" value="F:superoxide-generating NAD(P)H oxidase activity"/>
    <property type="evidence" value="ECO:0007669"/>
    <property type="project" value="Ensembl"/>
</dbReference>
<dbReference type="GO" id="GO:0017004">
    <property type="term" value="P:cytochrome complex assembly"/>
    <property type="evidence" value="ECO:0007669"/>
    <property type="project" value="Ensembl"/>
</dbReference>
<dbReference type="GO" id="GO:0051649">
    <property type="term" value="P:establishment of localization in cell"/>
    <property type="evidence" value="ECO:0007669"/>
    <property type="project" value="Ensembl"/>
</dbReference>
<dbReference type="GO" id="GO:0006954">
    <property type="term" value="P:inflammatory response"/>
    <property type="evidence" value="ECO:0007669"/>
    <property type="project" value="Ensembl"/>
</dbReference>
<dbReference type="GO" id="GO:0045087">
    <property type="term" value="P:innate immune response"/>
    <property type="evidence" value="ECO:0000250"/>
    <property type="project" value="UniProtKB"/>
</dbReference>
<dbReference type="GO" id="GO:0070254">
    <property type="term" value="P:mucus secretion"/>
    <property type="evidence" value="ECO:0007669"/>
    <property type="project" value="Ensembl"/>
</dbReference>
<dbReference type="GO" id="GO:1900426">
    <property type="term" value="P:positive regulation of defense response to bacterium"/>
    <property type="evidence" value="ECO:0007669"/>
    <property type="project" value="Ensembl"/>
</dbReference>
<dbReference type="GO" id="GO:0032755">
    <property type="term" value="P:positive regulation of interleukin-6 production"/>
    <property type="evidence" value="ECO:0007669"/>
    <property type="project" value="Ensembl"/>
</dbReference>
<dbReference type="GO" id="GO:0070257">
    <property type="term" value="P:positive regulation of mucus secretion"/>
    <property type="evidence" value="ECO:0007669"/>
    <property type="project" value="Ensembl"/>
</dbReference>
<dbReference type="GO" id="GO:0050766">
    <property type="term" value="P:positive regulation of phagocytosis"/>
    <property type="evidence" value="ECO:0007669"/>
    <property type="project" value="Ensembl"/>
</dbReference>
<dbReference type="GO" id="GO:1903428">
    <property type="term" value="P:positive regulation of reactive oxygen species biosynthetic process"/>
    <property type="evidence" value="ECO:0007669"/>
    <property type="project" value="Ensembl"/>
</dbReference>
<dbReference type="GO" id="GO:0034137">
    <property type="term" value="P:positive regulation of toll-like receptor 2 signaling pathway"/>
    <property type="evidence" value="ECO:0007669"/>
    <property type="project" value="Ensembl"/>
</dbReference>
<dbReference type="GO" id="GO:0032760">
    <property type="term" value="P:positive regulation of tumor necrosis factor production"/>
    <property type="evidence" value="ECO:0007669"/>
    <property type="project" value="Ensembl"/>
</dbReference>
<dbReference type="GO" id="GO:0051279">
    <property type="term" value="P:regulation of release of sequestered calcium ion into cytosol"/>
    <property type="evidence" value="ECO:0007669"/>
    <property type="project" value="Ensembl"/>
</dbReference>
<dbReference type="GO" id="GO:0045730">
    <property type="term" value="P:respiratory burst"/>
    <property type="evidence" value="ECO:0007669"/>
    <property type="project" value="Ensembl"/>
</dbReference>
<dbReference type="GO" id="GO:0042554">
    <property type="term" value="P:superoxide anion generation"/>
    <property type="evidence" value="ECO:0000318"/>
    <property type="project" value="GO_Central"/>
</dbReference>
<dbReference type="InterPro" id="IPR007732">
    <property type="entry name" value="Cyt_b558_asu"/>
</dbReference>
<dbReference type="PANTHER" id="PTHR15168">
    <property type="entry name" value="CYTOCHROME B-245 LIGHT CHAIN"/>
    <property type="match status" value="1"/>
</dbReference>
<dbReference type="PANTHER" id="PTHR15168:SF0">
    <property type="entry name" value="CYTOCHROME B-245 LIGHT CHAIN"/>
    <property type="match status" value="1"/>
</dbReference>
<dbReference type="Pfam" id="PF05038">
    <property type="entry name" value="Cytochrom_B558a"/>
    <property type="match status" value="1"/>
</dbReference>
<dbReference type="PIRSF" id="PIRSF019635">
    <property type="entry name" value="Cytochr_b558a"/>
    <property type="match status" value="1"/>
</dbReference>
<comment type="function">
    <text evidence="1">Subunit of NADPH oxidase complexes that is required for the NADPH oxidase activity that generates, in various cell types, superoxide from molecular oxygen utilizing NADPH as an electron donor. Subunit of the phagocyte NADPH oxidase complex that mediates the transfer of electrons from cytosolic NADPH to O2 to produce the superoxide anion (O2(-)). In the activated complex, electrons are first transferred from NADPH to flavin adenine dinucleotide (FAD) and subsequently transferred via two heme molecules to molecular oxygen, producing superoxide through an outer-sphere reaction. Activation of the NADPH oxidase complex is initiated by the assembly of cytosolic subunits of the NADPH oxidase complex with the core NADPH oxidase complex to form a complex at the plasma membrane or phagosomal membrane. This activation process is initiated by phosphorylation dependent binding of the cytosolic NCF1/p47-phox subunit to the C-terminus of CYBA/p22-phox. Aassociates with NOX3 to form a functional NADPH oxidase constitutively generating superoxide.</text>
</comment>
<comment type="subunit">
    <text evidence="1 2">Component of the phagocyte NADPH oxidase core complex/cytochrome b558 complex, composed of CYBB (heavy chain (beta)) and CYBA (light chain (alpha)). Component of the phagocyte NADPH oxidase complex composed of an obligatory core heterodimer formed by the membrane proteins CYBA and CYBB and the cytosolic regulatory subunits NCF1/p47-phox, NCF2/p67-phox, NCF4/p40-phox and the small GTPase RAC1 or RAC2. Interacts with NCF1 (via SH3 domain) (By similarity). Interacts with SH3PXD2A (By similarity). Interacts with DUOX1, DUOX2 and TPO. Interacts with NOX4; this interaction mediates superoxide generation. Interacts with calprotectin (S100A8/9) (By similarity). Interacts with GBP7 (By similarity). Interacts with NOXO1. Forms a heterodimer with NOX3 and is essential for activity and cell membrane localization of NOX3. Interacts with NOX1 (By similarity).</text>
</comment>
<comment type="subcellular location">
    <subcellularLocation>
        <location evidence="1">Cell membrane</location>
        <topology evidence="1">Multi-pass membrane protein</topology>
    </subcellularLocation>
</comment>
<comment type="PTM">
    <text evidence="1">Phosphorylation at Thr-147 enhances NADPH oxidase activity by promoting NCF1/p47-phox binding.</text>
</comment>
<comment type="PTM">
    <text evidence="2">Ubiquitinated at Lys-149 likely by RNF145.</text>
</comment>
<comment type="similarity">
    <text evidence="4">Belongs to the p22phox family.</text>
</comment>